<feature type="signal peptide" evidence="1">
    <location>
        <begin position="1"/>
        <end position="29"/>
    </location>
</feature>
<feature type="chain" id="PRO_0000014532" description="Butyrophilin subfamily 3 member A1">
    <location>
        <begin position="30"/>
        <end position="513"/>
    </location>
</feature>
<feature type="topological domain" description="Extracellular" evidence="1">
    <location>
        <begin position="30"/>
        <end position="254"/>
    </location>
</feature>
<feature type="transmembrane region" description="Helical" evidence="1">
    <location>
        <begin position="255"/>
        <end position="271"/>
    </location>
</feature>
<feature type="topological domain" description="Cytoplasmic" evidence="1">
    <location>
        <begin position="272"/>
        <end position="513"/>
    </location>
</feature>
<feature type="domain" description="Ig-like V-type 1">
    <location>
        <begin position="30"/>
        <end position="139"/>
    </location>
</feature>
<feature type="domain" description="Ig-like V-type 2">
    <location>
        <begin position="145"/>
        <end position="236"/>
    </location>
</feature>
<feature type="domain" description="B30.2/SPRY" evidence="3">
    <location>
        <begin position="322"/>
        <end position="513"/>
    </location>
</feature>
<feature type="glycosylation site" description="N-linked (GlcNAc...) asparagine" evidence="10">
    <location>
        <position position="115"/>
    </location>
</feature>
<feature type="disulfide bond" evidence="2 10">
    <location>
        <begin position="52"/>
        <end position="126"/>
    </location>
</feature>
<feature type="disulfide bond" evidence="2 10">
    <location>
        <begin position="166"/>
        <end position="220"/>
    </location>
</feature>
<feature type="splice variant" id="VSP_045062" description="In isoform 4." evidence="13">
    <location>
        <begin position="143"/>
        <end position="194"/>
    </location>
</feature>
<feature type="splice variant" id="VSP_042034" description="In isoform 3." evidence="13">
    <original>ADVILDPKTANPILLVSEDQRSVQRAKEPQDLPDNPERFNWHYCVLGCESFISGRHYWEVEVGDRKEWHIGVCSKNVQRKGWVKMTPENGFWTMGLTDGNKYRTLTEPRTNLKLPKPPKKVGVFLDYETGDISFYNAVDGSHIHTFLDVSFSEALYPVFRILTLEPTALTICPA</original>
    <variation>GPPIGQTQQQTRGQGSPVALSQESAQRTDSWGPEEGGES</variation>
    <location>
        <begin position="340"/>
        <end position="513"/>
    </location>
</feature>
<feature type="splice variant" id="VSP_012714" description="In isoform 2." evidence="14">
    <original>ADVILDPKTANPI</original>
    <variation>GEEMLQMRLHFVK</variation>
    <location>
        <begin position="340"/>
        <end position="352"/>
    </location>
</feature>
<feature type="splice variant" id="VSP_012715" description="In isoform 2." evidence="14">
    <location>
        <begin position="353"/>
        <end position="513"/>
    </location>
</feature>
<feature type="sequence variant" id="VAR_061305" description="In dbSNP:rs56161420." evidence="4">
    <original>R</original>
    <variation>H</variation>
    <location>
        <position position="15"/>
    </location>
</feature>
<feature type="sequence variant" id="VAR_021170" description="In dbSNP:rs1057933." evidence="12">
    <original>S</original>
    <variation>N</variation>
    <location>
        <position position="224"/>
    </location>
</feature>
<feature type="sequence variant" id="VAR_061306" description="In dbSNP:rs41266839." evidence="4">
    <original>R</original>
    <variation>T</variation>
    <location>
        <position position="282"/>
    </location>
</feature>
<feature type="sequence variant" id="VAR_028788" description="In dbSNP:rs4712990." evidence="5">
    <original>P</original>
    <variation>T</variation>
    <location>
        <position position="456"/>
    </location>
</feature>
<feature type="sequence conflict" description="In Ref. 3; BAG58563." evidence="15" ref="3">
    <original>N</original>
    <variation>S</variation>
    <location>
        <position position="13"/>
    </location>
</feature>
<feature type="sequence conflict" description="In Ref. 4; BAD97194." evidence="15" ref="4">
    <original>M</original>
    <variation>T</variation>
    <location>
        <position position="25"/>
    </location>
</feature>
<feature type="sequence conflict" description="In Ref. 3; BAG61334." evidence="15" ref="3">
    <original>E</original>
    <variation>K</variation>
    <location>
        <position position="46"/>
    </location>
</feature>
<feature type="sequence conflict" description="In Ref. 1; CAA69164." evidence="15" ref="1">
    <original>L</original>
    <variation>F</variation>
    <location>
        <position position="111"/>
    </location>
</feature>
<feature type="sequence conflict" description="In Ref. 1; CAA69164." evidence="15" ref="1">
    <original>A</original>
    <variation>G</variation>
    <location>
        <position position="118"/>
    </location>
</feature>
<feature type="sequence conflict" description="In Ref. 1; CAA69164." evidence="15" ref="1">
    <original>SG</original>
    <variation>RW</variation>
    <location>
        <begin position="121"/>
        <end position="122"/>
    </location>
</feature>
<feature type="sequence conflict" description="In Ref. 3; BAG58563." evidence="15" ref="3">
    <original>D</original>
    <variation>G</variation>
    <location>
        <position position="130"/>
    </location>
</feature>
<feature type="sequence conflict" description="In Ref. 1; CAA69164." evidence="15" ref="1">
    <original>D</original>
    <variation>R</variation>
    <location>
        <position position="239"/>
    </location>
</feature>
<feature type="sequence conflict" description="In Ref. 2; AAB53430." evidence="15" ref="2">
    <original>G</original>
    <variation>R</variation>
    <location>
        <position position="254"/>
    </location>
</feature>
<feature type="sequence conflict" description="In Ref. 2; AAB53430." evidence="15" ref="2">
    <original>T</original>
    <variation>S</variation>
    <location>
        <position position="509"/>
    </location>
</feature>
<feature type="strand" evidence="17">
    <location>
        <begin position="32"/>
        <end position="34"/>
    </location>
</feature>
<feature type="strand" evidence="17">
    <location>
        <begin position="40"/>
        <end position="43"/>
    </location>
</feature>
<feature type="strand" evidence="17">
    <location>
        <begin position="48"/>
        <end position="56"/>
    </location>
</feature>
<feature type="strand" evidence="17">
    <location>
        <begin position="63"/>
        <end position="69"/>
    </location>
</feature>
<feature type="turn" evidence="17">
    <location>
        <begin position="70"/>
        <end position="73"/>
    </location>
</feature>
<feature type="strand" evidence="17">
    <location>
        <begin position="74"/>
        <end position="80"/>
    </location>
</feature>
<feature type="helix" evidence="17">
    <location>
        <begin position="86"/>
        <end position="88"/>
    </location>
</feature>
<feature type="helix" evidence="17">
    <location>
        <begin position="91"/>
        <end position="93"/>
    </location>
</feature>
<feature type="strand" evidence="17">
    <location>
        <begin position="96"/>
        <end position="100"/>
    </location>
</feature>
<feature type="helix" evidence="17">
    <location>
        <begin position="104"/>
        <end position="106"/>
    </location>
</feature>
<feature type="strand" evidence="17">
    <location>
        <begin position="108"/>
        <end position="115"/>
    </location>
</feature>
<feature type="helix" evidence="17">
    <location>
        <begin position="118"/>
        <end position="120"/>
    </location>
</feature>
<feature type="strand" evidence="17">
    <location>
        <begin position="122"/>
        <end position="130"/>
    </location>
</feature>
<feature type="strand" evidence="17">
    <location>
        <begin position="133"/>
        <end position="143"/>
    </location>
</feature>
<feature type="strand" evidence="16">
    <location>
        <begin position="151"/>
        <end position="158"/>
    </location>
</feature>
<feature type="strand" evidence="16">
    <location>
        <begin position="161"/>
        <end position="173"/>
    </location>
</feature>
<feature type="strand" evidence="16">
    <location>
        <begin position="176"/>
        <end position="180"/>
    </location>
</feature>
<feature type="strand" evidence="21">
    <location>
        <begin position="190"/>
        <end position="196"/>
    </location>
</feature>
<feature type="strand" evidence="16">
    <location>
        <begin position="202"/>
        <end position="210"/>
    </location>
</feature>
<feature type="strand" evidence="16">
    <location>
        <begin position="218"/>
        <end position="224"/>
    </location>
</feature>
<feature type="turn" evidence="16">
    <location>
        <begin position="225"/>
        <end position="228"/>
    </location>
</feature>
<feature type="strand" evidence="16">
    <location>
        <begin position="229"/>
        <end position="235"/>
    </location>
</feature>
<feature type="turn" evidence="16">
    <location>
        <begin position="239"/>
        <end position="241"/>
    </location>
</feature>
<feature type="helix" evidence="18">
    <location>
        <begin position="308"/>
        <end position="320"/>
    </location>
</feature>
<feature type="turn" evidence="18">
    <location>
        <begin position="321"/>
        <end position="323"/>
    </location>
</feature>
<feature type="helix" evidence="20">
    <location>
        <begin position="328"/>
        <end position="336"/>
    </location>
</feature>
<feature type="strand" evidence="19">
    <location>
        <begin position="337"/>
        <end position="339"/>
    </location>
</feature>
<feature type="helix" evidence="20">
    <location>
        <begin position="346"/>
        <end position="348"/>
    </location>
</feature>
<feature type="strand" evidence="20">
    <location>
        <begin position="353"/>
        <end position="355"/>
    </location>
</feature>
<feature type="strand" evidence="20">
    <location>
        <begin position="359"/>
        <end position="364"/>
    </location>
</feature>
<feature type="strand" evidence="20">
    <location>
        <begin position="379"/>
        <end position="381"/>
    </location>
</feature>
<feature type="strand" evidence="20">
    <location>
        <begin position="383"/>
        <end position="387"/>
    </location>
</feature>
<feature type="strand" evidence="20">
    <location>
        <begin position="390"/>
        <end position="400"/>
    </location>
</feature>
<feature type="strand" evidence="20">
    <location>
        <begin position="407"/>
        <end position="413"/>
    </location>
</feature>
<feature type="helix" evidence="20">
    <location>
        <begin position="426"/>
        <end position="428"/>
    </location>
</feature>
<feature type="strand" evidence="20">
    <location>
        <begin position="430"/>
        <end position="436"/>
    </location>
</feature>
<feature type="turn" evidence="20">
    <location>
        <begin position="437"/>
        <end position="439"/>
    </location>
</feature>
<feature type="strand" evidence="20">
    <location>
        <begin position="440"/>
        <end position="447"/>
    </location>
</feature>
<feature type="strand" evidence="19">
    <location>
        <begin position="449"/>
        <end position="451"/>
    </location>
</feature>
<feature type="strand" evidence="20">
    <location>
        <begin position="458"/>
        <end position="465"/>
    </location>
</feature>
<feature type="turn" evidence="20">
    <location>
        <begin position="466"/>
        <end position="469"/>
    </location>
</feature>
<feature type="strand" evidence="20">
    <location>
        <begin position="470"/>
        <end position="475"/>
    </location>
</feature>
<feature type="turn" evidence="20">
    <location>
        <begin position="476"/>
        <end position="478"/>
    </location>
</feature>
<feature type="strand" evidence="20">
    <location>
        <begin position="481"/>
        <end position="485"/>
    </location>
</feature>
<feature type="strand" evidence="22">
    <location>
        <begin position="490"/>
        <end position="492"/>
    </location>
</feature>
<feature type="strand" evidence="20">
    <location>
        <begin position="494"/>
        <end position="499"/>
    </location>
</feature>
<feature type="strand" evidence="20">
    <location>
        <begin position="508"/>
        <end position="510"/>
    </location>
</feature>
<organism>
    <name type="scientific">Homo sapiens</name>
    <name type="common">Human</name>
    <dbReference type="NCBI Taxonomy" id="9606"/>
    <lineage>
        <taxon>Eukaryota</taxon>
        <taxon>Metazoa</taxon>
        <taxon>Chordata</taxon>
        <taxon>Craniata</taxon>
        <taxon>Vertebrata</taxon>
        <taxon>Euteleostomi</taxon>
        <taxon>Mammalia</taxon>
        <taxon>Eutheria</taxon>
        <taxon>Euarchontoglires</taxon>
        <taxon>Primates</taxon>
        <taxon>Haplorrhini</taxon>
        <taxon>Catarrhini</taxon>
        <taxon>Hominidae</taxon>
        <taxon>Homo</taxon>
    </lineage>
</organism>
<dbReference type="EMBL" id="Y07827">
    <property type="protein sequence ID" value="CAA69164.1"/>
    <property type="status" value="ALT_INIT"/>
    <property type="molecule type" value="mRNA"/>
</dbReference>
<dbReference type="EMBL" id="U90552">
    <property type="protein sequence ID" value="AAB53430.1"/>
    <property type="molecule type" value="mRNA"/>
</dbReference>
<dbReference type="EMBL" id="AK223474">
    <property type="protein sequence ID" value="BAD97194.1"/>
    <property type="molecule type" value="mRNA"/>
</dbReference>
<dbReference type="EMBL" id="AK290193">
    <property type="protein sequence ID" value="BAF82882.1"/>
    <property type="molecule type" value="mRNA"/>
</dbReference>
<dbReference type="EMBL" id="AK295720">
    <property type="protein sequence ID" value="BAG58563.1"/>
    <property type="molecule type" value="mRNA"/>
</dbReference>
<dbReference type="EMBL" id="AK299327">
    <property type="protein sequence ID" value="BAG61334.1"/>
    <property type="molecule type" value="mRNA"/>
</dbReference>
<dbReference type="EMBL" id="AL021917">
    <property type="status" value="NOT_ANNOTATED_CDS"/>
    <property type="molecule type" value="Genomic_DNA"/>
</dbReference>
<dbReference type="EMBL" id="CH471087">
    <property type="protein sequence ID" value="EAW55566.1"/>
    <property type="molecule type" value="Genomic_DNA"/>
</dbReference>
<dbReference type="EMBL" id="CH471087">
    <property type="protein sequence ID" value="EAW55567.1"/>
    <property type="molecule type" value="Genomic_DNA"/>
</dbReference>
<dbReference type="EMBL" id="BC118586">
    <property type="protein sequence ID" value="AAI18587.1"/>
    <property type="molecule type" value="mRNA"/>
</dbReference>
<dbReference type="EMBL" id="BC121800">
    <property type="protein sequence ID" value="AAI21801.1"/>
    <property type="molecule type" value="mRNA"/>
</dbReference>
<dbReference type="CCDS" id="CCDS4608.1">
    <molecule id="O00481-1"/>
</dbReference>
<dbReference type="CCDS" id="CCDS4609.1">
    <molecule id="O00481-2"/>
</dbReference>
<dbReference type="CCDS" id="CCDS47388.1">
    <molecule id="O00481-4"/>
</dbReference>
<dbReference type="CCDS" id="CCDS47389.1">
    <molecule id="O00481-3"/>
</dbReference>
<dbReference type="RefSeq" id="NP_001138480.1">
    <molecule id="O00481-4"/>
    <property type="nucleotide sequence ID" value="NM_001145008.2"/>
</dbReference>
<dbReference type="RefSeq" id="NP_001138481.1">
    <molecule id="O00481-3"/>
    <property type="nucleotide sequence ID" value="NM_001145009.2"/>
</dbReference>
<dbReference type="RefSeq" id="NP_008979.3">
    <molecule id="O00481-1"/>
    <property type="nucleotide sequence ID" value="NM_007048.5"/>
</dbReference>
<dbReference type="RefSeq" id="NP_919423.1">
    <molecule id="O00481-2"/>
    <property type="nucleotide sequence ID" value="NM_194441.3"/>
</dbReference>
<dbReference type="RefSeq" id="XP_005248891.1">
    <molecule id="O00481-2"/>
    <property type="nucleotide sequence ID" value="XM_005248834.5"/>
</dbReference>
<dbReference type="RefSeq" id="XP_047274076.1">
    <molecule id="O00481-1"/>
    <property type="nucleotide sequence ID" value="XM_047418120.1"/>
</dbReference>
<dbReference type="RefSeq" id="XP_047274077.1">
    <molecule id="O00481-1"/>
    <property type="nucleotide sequence ID" value="XM_047418121.1"/>
</dbReference>
<dbReference type="RefSeq" id="XP_047274079.1">
    <molecule id="O00481-3"/>
    <property type="nucleotide sequence ID" value="XM_047418123.1"/>
</dbReference>
<dbReference type="RefSeq" id="XP_047274080.1">
    <molecule id="O00481-2"/>
    <property type="nucleotide sequence ID" value="XM_047418124.1"/>
</dbReference>
<dbReference type="RefSeq" id="XP_054210087.1">
    <molecule id="O00481-1"/>
    <property type="nucleotide sequence ID" value="XM_054354112.1"/>
</dbReference>
<dbReference type="RefSeq" id="XP_054210088.1">
    <molecule id="O00481-1"/>
    <property type="nucleotide sequence ID" value="XM_054354113.1"/>
</dbReference>
<dbReference type="RefSeq" id="XP_054210091.1">
    <molecule id="O00481-3"/>
    <property type="nucleotide sequence ID" value="XM_054354116.1"/>
</dbReference>
<dbReference type="RefSeq" id="XP_054210092.1">
    <molecule id="O00481-2"/>
    <property type="nucleotide sequence ID" value="XM_054354117.1"/>
</dbReference>
<dbReference type="RefSeq" id="XP_054210093.1">
    <molecule id="O00481-2"/>
    <property type="nucleotide sequence ID" value="XM_054354118.1"/>
</dbReference>
<dbReference type="PDB" id="4F80">
    <property type="method" value="X-ray"/>
    <property type="resolution" value="1.94 A"/>
    <property type="chains" value="A=30-246"/>
</dbReference>
<dbReference type="PDB" id="4F9L">
    <property type="method" value="X-ray"/>
    <property type="resolution" value="3.14 A"/>
    <property type="chains" value="A/B=30-246"/>
</dbReference>
<dbReference type="PDB" id="4F9P">
    <property type="method" value="X-ray"/>
    <property type="resolution" value="3.52 A"/>
    <property type="chains" value="A/B=30-246"/>
</dbReference>
<dbReference type="PDB" id="4JKW">
    <property type="method" value="X-ray"/>
    <property type="resolution" value="2.01 A"/>
    <property type="chains" value="A=28-143"/>
</dbReference>
<dbReference type="PDB" id="4K55">
    <property type="method" value="X-ray"/>
    <property type="resolution" value="1.91 A"/>
    <property type="chains" value="A=28-143"/>
</dbReference>
<dbReference type="PDB" id="4N7I">
    <property type="method" value="X-ray"/>
    <property type="resolution" value="1.40 A"/>
    <property type="chains" value="A=328-513"/>
</dbReference>
<dbReference type="PDB" id="4N7U">
    <property type="method" value="X-ray"/>
    <property type="resolution" value="1.46 A"/>
    <property type="chains" value="A=328-513"/>
</dbReference>
<dbReference type="PDB" id="4V1P">
    <property type="method" value="X-ray"/>
    <property type="resolution" value="2.04 A"/>
    <property type="chains" value="A=325-512"/>
</dbReference>
<dbReference type="PDB" id="5HM7">
    <property type="method" value="X-ray"/>
    <property type="resolution" value="1.93 A"/>
    <property type="chains" value="A/B=272-513"/>
</dbReference>
<dbReference type="PDB" id="5LYG">
    <property type="method" value="X-ray"/>
    <property type="resolution" value="1.60 A"/>
    <property type="chains" value="A=327-513"/>
</dbReference>
<dbReference type="PDB" id="5LYK">
    <property type="method" value="X-ray"/>
    <property type="resolution" value="1.70 A"/>
    <property type="chains" value="A=327-513"/>
</dbReference>
<dbReference type="PDB" id="5ZXK">
    <property type="method" value="X-ray"/>
    <property type="resolution" value="1.96 A"/>
    <property type="chains" value="A=328-513"/>
</dbReference>
<dbReference type="PDB" id="6ISM">
    <property type="method" value="X-ray"/>
    <property type="resolution" value="1.25 A"/>
    <property type="chains" value="A=328-513"/>
</dbReference>
<dbReference type="PDB" id="6ITA">
    <property type="method" value="X-ray"/>
    <property type="resolution" value="1.20 A"/>
    <property type="chains" value="A=328-513"/>
</dbReference>
<dbReference type="PDB" id="6J06">
    <property type="method" value="X-ray"/>
    <property type="resolution" value="2.65 A"/>
    <property type="chains" value="A/B/C=328-513"/>
</dbReference>
<dbReference type="PDB" id="6XLQ">
    <property type="method" value="X-ray"/>
    <property type="resolution" value="3.00 A"/>
    <property type="chains" value="A/D/G/J=30-255"/>
</dbReference>
<dbReference type="PDB" id="8DFX">
    <property type="method" value="X-ray"/>
    <property type="resolution" value="5.55 A"/>
    <property type="chains" value="B=30-246"/>
</dbReference>
<dbReference type="PDB" id="8IXV">
    <property type="method" value="X-ray"/>
    <property type="resolution" value="1.72 A"/>
    <property type="chains" value="A=328-513"/>
</dbReference>
<dbReference type="PDB" id="8IZE">
    <property type="method" value="X-ray"/>
    <property type="resolution" value="1.40 A"/>
    <property type="chains" value="A=328-513"/>
</dbReference>
<dbReference type="PDB" id="8IZG">
    <property type="method" value="X-ray"/>
    <property type="resolution" value="1.60 A"/>
    <property type="chains" value="A=328-513"/>
</dbReference>
<dbReference type="PDB" id="8JYC">
    <property type="method" value="X-ray"/>
    <property type="resolution" value="2.29 A"/>
    <property type="chains" value="C/D=328-513"/>
</dbReference>
<dbReference type="PDB" id="8JYE">
    <property type="method" value="X-ray"/>
    <property type="resolution" value="2.18 A"/>
    <property type="chains" value="C/D=328-513"/>
</dbReference>
<dbReference type="PDBsum" id="4F80"/>
<dbReference type="PDBsum" id="4F9L"/>
<dbReference type="PDBsum" id="4F9P"/>
<dbReference type="PDBsum" id="4JKW"/>
<dbReference type="PDBsum" id="4K55"/>
<dbReference type="PDBsum" id="4N7I"/>
<dbReference type="PDBsum" id="4N7U"/>
<dbReference type="PDBsum" id="4V1P"/>
<dbReference type="PDBsum" id="5HM7"/>
<dbReference type="PDBsum" id="5LYG"/>
<dbReference type="PDBsum" id="5LYK"/>
<dbReference type="PDBsum" id="5ZXK"/>
<dbReference type="PDBsum" id="6ISM"/>
<dbReference type="PDBsum" id="6ITA"/>
<dbReference type="PDBsum" id="6J06"/>
<dbReference type="PDBsum" id="6XLQ"/>
<dbReference type="PDBsum" id="8DFX"/>
<dbReference type="PDBsum" id="8IXV"/>
<dbReference type="PDBsum" id="8IZE"/>
<dbReference type="PDBsum" id="8IZG"/>
<dbReference type="PDBsum" id="8JYC"/>
<dbReference type="PDBsum" id="8JYE"/>
<dbReference type="SMR" id="O00481"/>
<dbReference type="BioGRID" id="116294">
    <property type="interactions" value="24"/>
</dbReference>
<dbReference type="FunCoup" id="O00481">
    <property type="interactions" value="476"/>
</dbReference>
<dbReference type="IntAct" id="O00481">
    <property type="interactions" value="22"/>
</dbReference>
<dbReference type="STRING" id="9606.ENSP00000289361"/>
<dbReference type="BindingDB" id="O00481"/>
<dbReference type="ChEMBL" id="CHEMBL4105758"/>
<dbReference type="DrugCentral" id="O00481"/>
<dbReference type="GlyConnect" id="1048">
    <property type="glycosylation" value="1 N-Linked glycan (1 site)"/>
</dbReference>
<dbReference type="GlyCosmos" id="O00481">
    <property type="glycosylation" value="3 sites, 1 glycan"/>
</dbReference>
<dbReference type="GlyGen" id="O00481">
    <property type="glycosylation" value="3 sites, 1 O-linked glycan (2 sites)"/>
</dbReference>
<dbReference type="iPTMnet" id="O00481"/>
<dbReference type="PhosphoSitePlus" id="O00481"/>
<dbReference type="BioMuta" id="BTN3A1"/>
<dbReference type="jPOST" id="O00481"/>
<dbReference type="MassIVE" id="O00481"/>
<dbReference type="PaxDb" id="9606-ENSP00000289361"/>
<dbReference type="PeptideAtlas" id="O00481"/>
<dbReference type="ProteomicsDB" id="20280"/>
<dbReference type="ProteomicsDB" id="47925">
    <molecule id="O00481-1"/>
</dbReference>
<dbReference type="ProteomicsDB" id="47926">
    <molecule id="O00481-2"/>
</dbReference>
<dbReference type="ProteomicsDB" id="47927">
    <molecule id="O00481-3"/>
</dbReference>
<dbReference type="Pumba" id="O00481"/>
<dbReference type="ABCD" id="O00481">
    <property type="antibodies" value="2 sequenced antibodies"/>
</dbReference>
<dbReference type="Antibodypedia" id="2248">
    <property type="antibodies" value="283 antibodies from 33 providers"/>
</dbReference>
<dbReference type="DNASU" id="11119"/>
<dbReference type="Ensembl" id="ENST00000289361.11">
    <molecule id="O00481-1"/>
    <property type="protein sequence ID" value="ENSP00000289361.6"/>
    <property type="gene ID" value="ENSG00000026950.17"/>
</dbReference>
<dbReference type="Ensembl" id="ENST00000414912.2">
    <molecule id="O00481-4"/>
    <property type="protein sequence ID" value="ENSP00000406667.2"/>
    <property type="gene ID" value="ENSG00000026950.17"/>
</dbReference>
<dbReference type="Ensembl" id="ENST00000425234.6">
    <molecule id="O00481-3"/>
    <property type="protein sequence ID" value="ENSP00000396684.2"/>
    <property type="gene ID" value="ENSG00000026950.17"/>
</dbReference>
<dbReference type="Ensembl" id="ENST00000476549.6">
    <molecule id="O00481-2"/>
    <property type="protein sequence ID" value="ENSP00000420010.2"/>
    <property type="gene ID" value="ENSG00000026950.17"/>
</dbReference>
<dbReference type="GeneID" id="11119"/>
<dbReference type="KEGG" id="hsa:11119"/>
<dbReference type="MANE-Select" id="ENST00000289361.11">
    <property type="protein sequence ID" value="ENSP00000289361.6"/>
    <property type="RefSeq nucleotide sequence ID" value="NM_007048.6"/>
    <property type="RefSeq protein sequence ID" value="NP_008979.3"/>
</dbReference>
<dbReference type="UCSC" id="uc003nhv.3">
    <molecule id="O00481-1"/>
    <property type="organism name" value="human"/>
</dbReference>
<dbReference type="AGR" id="HGNC:1138"/>
<dbReference type="CTD" id="11119"/>
<dbReference type="DisGeNET" id="11119"/>
<dbReference type="GeneCards" id="BTN3A1"/>
<dbReference type="HGNC" id="HGNC:1138">
    <property type="gene designation" value="BTN3A1"/>
</dbReference>
<dbReference type="HPA" id="ENSG00000026950">
    <property type="expression patterns" value="Low tissue specificity"/>
</dbReference>
<dbReference type="MIM" id="613593">
    <property type="type" value="gene"/>
</dbReference>
<dbReference type="neXtProt" id="NX_O00481"/>
<dbReference type="OpenTargets" id="ENSG00000026950"/>
<dbReference type="PharmGKB" id="PA25459"/>
<dbReference type="VEuPathDB" id="HostDB:ENSG00000026950"/>
<dbReference type="eggNOG" id="ENOG502QSRZ">
    <property type="taxonomic scope" value="Eukaryota"/>
</dbReference>
<dbReference type="GeneTree" id="ENSGT00940000163036"/>
<dbReference type="HOGENOM" id="CLU_013137_8_4_1"/>
<dbReference type="InParanoid" id="O00481"/>
<dbReference type="OMA" id="EACTFPP"/>
<dbReference type="OrthoDB" id="8901134at2759"/>
<dbReference type="PAN-GO" id="O00481">
    <property type="GO annotations" value="4 GO annotations based on evolutionary models"/>
</dbReference>
<dbReference type="PhylomeDB" id="O00481"/>
<dbReference type="TreeFam" id="TF331083"/>
<dbReference type="PathwayCommons" id="O00481"/>
<dbReference type="Reactome" id="R-HSA-8851680">
    <property type="pathway name" value="Butyrophilin (BTN) family interactions"/>
</dbReference>
<dbReference type="SignaLink" id="O00481"/>
<dbReference type="BioGRID-ORCS" id="11119">
    <property type="hits" value="12 hits in 1159 CRISPR screens"/>
</dbReference>
<dbReference type="ChiTaRS" id="BTN3A1">
    <property type="organism name" value="human"/>
</dbReference>
<dbReference type="EvolutionaryTrace" id="O00481"/>
<dbReference type="GeneWiki" id="Butyrophilin,_subfamily_3,_member_A1"/>
<dbReference type="GenomeRNAi" id="11119"/>
<dbReference type="Pharos" id="O00481">
    <property type="development level" value="Tchem"/>
</dbReference>
<dbReference type="PRO" id="PR:O00481"/>
<dbReference type="Proteomes" id="UP000005640">
    <property type="component" value="Chromosome 6"/>
</dbReference>
<dbReference type="RNAct" id="O00481">
    <property type="molecule type" value="protein"/>
</dbReference>
<dbReference type="Bgee" id="ENSG00000026950">
    <property type="expression patterns" value="Expressed in granulocyte and 191 other cell types or tissues"/>
</dbReference>
<dbReference type="ExpressionAtlas" id="O00481">
    <property type="expression patterns" value="baseline and differential"/>
</dbReference>
<dbReference type="GO" id="GO:0009897">
    <property type="term" value="C:external side of plasma membrane"/>
    <property type="evidence" value="ECO:0000318"/>
    <property type="project" value="GO_Central"/>
</dbReference>
<dbReference type="GO" id="GO:0005886">
    <property type="term" value="C:plasma membrane"/>
    <property type="evidence" value="ECO:0000314"/>
    <property type="project" value="UniProtKB"/>
</dbReference>
<dbReference type="GO" id="GO:0005102">
    <property type="term" value="F:signaling receptor binding"/>
    <property type="evidence" value="ECO:0000318"/>
    <property type="project" value="GO_Central"/>
</dbReference>
<dbReference type="GO" id="GO:0050798">
    <property type="term" value="P:activated T cell proliferation"/>
    <property type="evidence" value="ECO:0000315"/>
    <property type="project" value="UniProtKB"/>
</dbReference>
<dbReference type="GO" id="GO:0002250">
    <property type="term" value="P:adaptive immune response"/>
    <property type="evidence" value="ECO:0007669"/>
    <property type="project" value="UniProtKB-KW"/>
</dbReference>
<dbReference type="GO" id="GO:0001819">
    <property type="term" value="P:positive regulation of cytokine production"/>
    <property type="evidence" value="ECO:0000314"/>
    <property type="project" value="UniProtKB"/>
</dbReference>
<dbReference type="GO" id="GO:0032729">
    <property type="term" value="P:positive regulation of type II interferon production"/>
    <property type="evidence" value="ECO:0000315"/>
    <property type="project" value="UniProtKB"/>
</dbReference>
<dbReference type="GO" id="GO:0001817">
    <property type="term" value="P:regulation of cytokine production"/>
    <property type="evidence" value="ECO:0000318"/>
    <property type="project" value="GO_Central"/>
</dbReference>
<dbReference type="GO" id="GO:0050852">
    <property type="term" value="P:T cell receptor signaling pathway"/>
    <property type="evidence" value="ECO:0000314"/>
    <property type="project" value="UniProtKB"/>
</dbReference>
<dbReference type="CDD" id="cd05713">
    <property type="entry name" value="IgV_MOG_like"/>
    <property type="match status" value="1"/>
</dbReference>
<dbReference type="CDD" id="cd15820">
    <property type="entry name" value="SPRY_PRY_BTN3"/>
    <property type="match status" value="1"/>
</dbReference>
<dbReference type="FunFam" id="2.60.120.920:FF:000004">
    <property type="entry name" value="Butyrophilin subfamily 1 member A1"/>
    <property type="match status" value="1"/>
</dbReference>
<dbReference type="FunFam" id="2.60.40.10:FF:000088">
    <property type="entry name" value="Butyrophilin subfamily 1 member A1"/>
    <property type="match status" value="1"/>
</dbReference>
<dbReference type="FunFam" id="2.60.40.10:FF:000208">
    <property type="entry name" value="Butyrophilin subfamily 1 member A1"/>
    <property type="match status" value="1"/>
</dbReference>
<dbReference type="Gene3D" id="2.60.120.920">
    <property type="match status" value="1"/>
</dbReference>
<dbReference type="Gene3D" id="2.60.40.10">
    <property type="entry name" value="Immunoglobulins"/>
    <property type="match status" value="2"/>
</dbReference>
<dbReference type="InterPro" id="IPR001870">
    <property type="entry name" value="B30.2/SPRY"/>
</dbReference>
<dbReference type="InterPro" id="IPR043136">
    <property type="entry name" value="B30.2/SPRY_sf"/>
</dbReference>
<dbReference type="InterPro" id="IPR053896">
    <property type="entry name" value="BTN3A2-like_Ig-C"/>
</dbReference>
<dbReference type="InterPro" id="IPR003879">
    <property type="entry name" value="Butyrophylin_SPRY"/>
</dbReference>
<dbReference type="InterPro" id="IPR013320">
    <property type="entry name" value="ConA-like_dom_sf"/>
</dbReference>
<dbReference type="InterPro" id="IPR007110">
    <property type="entry name" value="Ig-like_dom"/>
</dbReference>
<dbReference type="InterPro" id="IPR036179">
    <property type="entry name" value="Ig-like_dom_sf"/>
</dbReference>
<dbReference type="InterPro" id="IPR013783">
    <property type="entry name" value="Ig-like_fold"/>
</dbReference>
<dbReference type="InterPro" id="IPR003599">
    <property type="entry name" value="Ig_sub"/>
</dbReference>
<dbReference type="InterPro" id="IPR013106">
    <property type="entry name" value="Ig_V-set"/>
</dbReference>
<dbReference type="InterPro" id="IPR050504">
    <property type="entry name" value="IgSF_BTN/MOG"/>
</dbReference>
<dbReference type="InterPro" id="IPR006574">
    <property type="entry name" value="PRY"/>
</dbReference>
<dbReference type="InterPro" id="IPR003877">
    <property type="entry name" value="SPRY_dom"/>
</dbReference>
<dbReference type="InterPro" id="IPR037954">
    <property type="entry name" value="SPRY_PRY_BTN3"/>
</dbReference>
<dbReference type="PANTHER" id="PTHR24100">
    <property type="entry name" value="BUTYROPHILIN"/>
    <property type="match status" value="1"/>
</dbReference>
<dbReference type="PANTHER" id="PTHR24100:SF128">
    <property type="entry name" value="BUTYROPHILIN SUBFAMILY 3 MEMBER A1"/>
    <property type="match status" value="1"/>
</dbReference>
<dbReference type="Pfam" id="PF22705">
    <property type="entry name" value="C2-set_3"/>
    <property type="match status" value="1"/>
</dbReference>
<dbReference type="Pfam" id="PF13765">
    <property type="entry name" value="PRY"/>
    <property type="match status" value="1"/>
</dbReference>
<dbReference type="Pfam" id="PF00622">
    <property type="entry name" value="SPRY"/>
    <property type="match status" value="1"/>
</dbReference>
<dbReference type="Pfam" id="PF07686">
    <property type="entry name" value="V-set"/>
    <property type="match status" value="1"/>
</dbReference>
<dbReference type="PRINTS" id="PR01407">
    <property type="entry name" value="BUTYPHLNCDUF"/>
</dbReference>
<dbReference type="SMART" id="SM00409">
    <property type="entry name" value="IG"/>
    <property type="match status" value="1"/>
</dbReference>
<dbReference type="SMART" id="SM00406">
    <property type="entry name" value="IGv"/>
    <property type="match status" value="1"/>
</dbReference>
<dbReference type="SMART" id="SM00589">
    <property type="entry name" value="PRY"/>
    <property type="match status" value="1"/>
</dbReference>
<dbReference type="SMART" id="SM00449">
    <property type="entry name" value="SPRY"/>
    <property type="match status" value="1"/>
</dbReference>
<dbReference type="SUPFAM" id="SSF49899">
    <property type="entry name" value="Concanavalin A-like lectins/glucanases"/>
    <property type="match status" value="1"/>
</dbReference>
<dbReference type="SUPFAM" id="SSF48726">
    <property type="entry name" value="Immunoglobulin"/>
    <property type="match status" value="2"/>
</dbReference>
<dbReference type="PROSITE" id="PS50188">
    <property type="entry name" value="B302_SPRY"/>
    <property type="match status" value="1"/>
</dbReference>
<dbReference type="PROSITE" id="PS50835">
    <property type="entry name" value="IG_LIKE"/>
    <property type="match status" value="2"/>
</dbReference>
<comment type="function">
    <text evidence="7 8 9 10">Plays a role in T-cell activation and in the adaptive immune response. Regulates the proliferation of activated T-cells. Regulates the release of cytokines and IFNG by activated T-cells. Mediates the response of T-cells toward infected and transformed cells that are characterized by high levels of phosphorylated metabolites, such as isopentenyl pyrophosphate.</text>
</comment>
<comment type="subunit">
    <text evidence="10">Homodimer.</text>
</comment>
<comment type="interaction">
    <interactant intactId="EBI-2809309">
        <id>O00481</id>
    </interactant>
    <interactant intactId="EBI-17564670">
        <id>P78410</id>
        <label>BTN3A2</label>
    </interactant>
    <organismsDiffer>false</organismsDiffer>
    <experiments>5</experiments>
</comment>
<comment type="interaction">
    <interactant intactId="EBI-2809309">
        <id>O00481</id>
    </interactant>
    <interactant intactId="EBI-2837387">
        <id>O00478</id>
        <label>BTN3A3</label>
    </interactant>
    <organismsDiffer>false</organismsDiffer>
    <experiments>3</experiments>
</comment>
<comment type="interaction">
    <interactant intactId="EBI-2809309">
        <id>O00481</id>
    </interactant>
    <interactant intactId="EBI-10976677">
        <id>G5E9A7</id>
        <label>DMWD</label>
    </interactant>
    <organismsDiffer>false</organismsDiffer>
    <experiments>3</experiments>
</comment>
<comment type="interaction">
    <interactant intactId="EBI-2809309">
        <id>O00481</id>
    </interactant>
    <interactant intactId="EBI-368321">
        <id>O60437</id>
        <label>PPL</label>
    </interactant>
    <organismsDiffer>false</organismsDiffer>
    <experiments>6</experiments>
</comment>
<comment type="interaction">
    <interactant intactId="EBI-2809309">
        <id>O00481</id>
    </interactant>
    <interactant intactId="EBI-743871">
        <id>P04155</id>
        <label>TFF1</label>
    </interactant>
    <organismsDiffer>false</organismsDiffer>
    <experiments>3</experiments>
</comment>
<comment type="interaction">
    <interactant intactId="EBI-14033666">
        <id>O00481-2</id>
    </interactant>
    <interactant intactId="EBI-368321">
        <id>O60437</id>
        <label>PPL</label>
    </interactant>
    <organismsDiffer>false</organismsDiffer>
    <experiments>5</experiments>
</comment>
<comment type="subcellular location">
    <subcellularLocation>
        <location evidence="7 8 9">Cell membrane</location>
        <topology evidence="7 8 9">Single-pass type I membrane protein</topology>
    </subcellularLocation>
</comment>
<comment type="alternative products">
    <event type="alternative splicing"/>
    <isoform>
        <id>O00481-1</id>
        <name>1</name>
        <sequence type="displayed"/>
    </isoform>
    <isoform>
        <id>O00481-2</id>
        <name>2</name>
        <sequence type="described" ref="VSP_012714 VSP_012715"/>
    </isoform>
    <isoform>
        <id>O00481-3</id>
        <name>3</name>
        <sequence type="described" ref="VSP_042034"/>
    </isoform>
    <isoform>
        <id>O00481-4</id>
        <name>4</name>
        <sequence type="described" ref="VSP_045062"/>
    </isoform>
</comment>
<comment type="tissue specificity">
    <text evidence="6 7 8 11">Detected on T-cells, natural killer cells, dendritic cells and macrophages (at protein level). Ubiquitous. Highly expressed in heart, pancreas and lung, Moderately expressed in placenta, liver and muscle.</text>
</comment>
<comment type="PTM">
    <text evidence="6 10">N-glycosylated.</text>
</comment>
<comment type="similarity">
    <text evidence="15">Belongs to the immunoglobulin superfamily. BTN/MOG family.</text>
</comment>
<comment type="sequence caution" evidence="15">
    <conflict type="erroneous initiation">
        <sequence resource="EMBL-CDS" id="CAA69164"/>
    </conflict>
    <text>Truncated N-terminus.</text>
</comment>
<keyword id="KW-0002">3D-structure</keyword>
<keyword id="KW-1064">Adaptive immunity</keyword>
<keyword id="KW-0025">Alternative splicing</keyword>
<keyword id="KW-1003">Cell membrane</keyword>
<keyword id="KW-1015">Disulfide bond</keyword>
<keyword id="KW-0325">Glycoprotein</keyword>
<keyword id="KW-0391">Immunity</keyword>
<keyword id="KW-0393">Immunoglobulin domain</keyword>
<keyword id="KW-0472">Membrane</keyword>
<keyword id="KW-1267">Proteomics identification</keyword>
<keyword id="KW-1185">Reference proteome</keyword>
<keyword id="KW-0677">Repeat</keyword>
<keyword id="KW-0732">Signal</keyword>
<keyword id="KW-0812">Transmembrane</keyword>
<keyword id="KW-1133">Transmembrane helix</keyword>
<evidence type="ECO:0000255" key="1"/>
<evidence type="ECO:0000255" key="2">
    <source>
        <dbReference type="PROSITE-ProRule" id="PRU00114"/>
    </source>
</evidence>
<evidence type="ECO:0000255" key="3">
    <source>
        <dbReference type="PROSITE-ProRule" id="PRU00548"/>
    </source>
</evidence>
<evidence type="ECO:0000269" key="4">
    <source>
    </source>
</evidence>
<evidence type="ECO:0000269" key="5">
    <source>
    </source>
</evidence>
<evidence type="ECO:0000269" key="6">
    <source>
    </source>
</evidence>
<evidence type="ECO:0000269" key="7">
    <source>
    </source>
</evidence>
<evidence type="ECO:0000269" key="8">
    <source>
    </source>
</evidence>
<evidence type="ECO:0000269" key="9">
    <source>
    </source>
</evidence>
<evidence type="ECO:0000269" key="10">
    <source>
    </source>
</evidence>
<evidence type="ECO:0000269" key="11">
    <source>
    </source>
</evidence>
<evidence type="ECO:0000269" key="12">
    <source>
    </source>
</evidence>
<evidence type="ECO:0000303" key="13">
    <source>
    </source>
</evidence>
<evidence type="ECO:0000303" key="14">
    <source>
    </source>
</evidence>
<evidence type="ECO:0000305" key="15"/>
<evidence type="ECO:0007829" key="16">
    <source>
        <dbReference type="PDB" id="4F80"/>
    </source>
</evidence>
<evidence type="ECO:0007829" key="17">
    <source>
        <dbReference type="PDB" id="4K55"/>
    </source>
</evidence>
<evidence type="ECO:0007829" key="18">
    <source>
        <dbReference type="PDB" id="5HM7"/>
    </source>
</evidence>
<evidence type="ECO:0007829" key="19">
    <source>
        <dbReference type="PDB" id="6ISM"/>
    </source>
</evidence>
<evidence type="ECO:0007829" key="20">
    <source>
        <dbReference type="PDB" id="6ITA"/>
    </source>
</evidence>
<evidence type="ECO:0007829" key="21">
    <source>
        <dbReference type="PDB" id="6XLQ"/>
    </source>
</evidence>
<evidence type="ECO:0007829" key="22">
    <source>
        <dbReference type="PDB" id="8JYE"/>
    </source>
</evidence>
<proteinExistence type="evidence at protein level"/>
<reference key="1">
    <citation type="journal article" date="1997" name="Immunogenetics">
        <title>Cloning, localization, and structure of new members of the butyrophilin gene family in the juxta-telomeric region of the major histocompatibility complex.</title>
        <authorList>
            <person name="Tazi-Ahnini R."/>
            <person name="Henry J."/>
            <person name="Offer C."/>
            <person name="Bouissou-Bouchouata C."/>
            <person name="Mather I.H."/>
            <person name="Pontarotti P."/>
        </authorList>
    </citation>
    <scope>NUCLEOTIDE SEQUENCE [MRNA] (ISOFORM 2)</scope>
    <scope>VARIANT ASN-224</scope>
</reference>
<reference key="2">
    <citation type="journal article" date="1997" name="Genome Res.">
        <title>A 1.1-Mb transcript map of the hereditary hemochromatosis locus.</title>
        <authorList>
            <person name="Ruddy D.A."/>
            <person name="Kronmal G.S."/>
            <person name="Lee V.K."/>
            <person name="Mintier G.A."/>
            <person name="Quintana L."/>
            <person name="Domingo R. Jr."/>
            <person name="Meyer N.C."/>
            <person name="Irrinki A."/>
            <person name="McClelland E.E."/>
            <person name="Fullan A."/>
            <person name="Mapa F.A."/>
            <person name="Moore T."/>
            <person name="Thomas W."/>
            <person name="Loeb D.B."/>
            <person name="Harmon C."/>
            <person name="Tsuchihashi Z."/>
            <person name="Wolff R.K."/>
            <person name="Schatzman R.C."/>
            <person name="Feder J.N."/>
        </authorList>
    </citation>
    <scope>NUCLEOTIDE SEQUENCE [MRNA] (ISOFORM 1)</scope>
    <scope>TISSUE SPECIFICITY</scope>
</reference>
<reference key="3">
    <citation type="journal article" date="2004" name="Nat. Genet.">
        <title>Complete sequencing and characterization of 21,243 full-length human cDNAs.</title>
        <authorList>
            <person name="Ota T."/>
            <person name="Suzuki Y."/>
            <person name="Nishikawa T."/>
            <person name="Otsuki T."/>
            <person name="Sugiyama T."/>
            <person name="Irie R."/>
            <person name="Wakamatsu A."/>
            <person name="Hayashi K."/>
            <person name="Sato H."/>
            <person name="Nagai K."/>
            <person name="Kimura K."/>
            <person name="Makita H."/>
            <person name="Sekine M."/>
            <person name="Obayashi M."/>
            <person name="Nishi T."/>
            <person name="Shibahara T."/>
            <person name="Tanaka T."/>
            <person name="Ishii S."/>
            <person name="Yamamoto J."/>
            <person name="Saito K."/>
            <person name="Kawai Y."/>
            <person name="Isono Y."/>
            <person name="Nakamura Y."/>
            <person name="Nagahari K."/>
            <person name="Murakami K."/>
            <person name="Yasuda T."/>
            <person name="Iwayanagi T."/>
            <person name="Wagatsuma M."/>
            <person name="Shiratori A."/>
            <person name="Sudo H."/>
            <person name="Hosoiri T."/>
            <person name="Kaku Y."/>
            <person name="Kodaira H."/>
            <person name="Kondo H."/>
            <person name="Sugawara M."/>
            <person name="Takahashi M."/>
            <person name="Kanda K."/>
            <person name="Yokoi T."/>
            <person name="Furuya T."/>
            <person name="Kikkawa E."/>
            <person name="Omura Y."/>
            <person name="Abe K."/>
            <person name="Kamihara K."/>
            <person name="Katsuta N."/>
            <person name="Sato K."/>
            <person name="Tanikawa M."/>
            <person name="Yamazaki M."/>
            <person name="Ninomiya K."/>
            <person name="Ishibashi T."/>
            <person name="Yamashita H."/>
            <person name="Murakawa K."/>
            <person name="Fujimori K."/>
            <person name="Tanai H."/>
            <person name="Kimata M."/>
            <person name="Watanabe M."/>
            <person name="Hiraoka S."/>
            <person name="Chiba Y."/>
            <person name="Ishida S."/>
            <person name="Ono Y."/>
            <person name="Takiguchi S."/>
            <person name="Watanabe S."/>
            <person name="Yosida M."/>
            <person name="Hotuta T."/>
            <person name="Kusano J."/>
            <person name="Kanehori K."/>
            <person name="Takahashi-Fujii A."/>
            <person name="Hara H."/>
            <person name="Tanase T.-O."/>
            <person name="Nomura Y."/>
            <person name="Togiya S."/>
            <person name="Komai F."/>
            <person name="Hara R."/>
            <person name="Takeuchi K."/>
            <person name="Arita M."/>
            <person name="Imose N."/>
            <person name="Musashino K."/>
            <person name="Yuuki H."/>
            <person name="Oshima A."/>
            <person name="Sasaki N."/>
            <person name="Aotsuka S."/>
            <person name="Yoshikawa Y."/>
            <person name="Matsunawa H."/>
            <person name="Ichihara T."/>
            <person name="Shiohata N."/>
            <person name="Sano S."/>
            <person name="Moriya S."/>
            <person name="Momiyama H."/>
            <person name="Satoh N."/>
            <person name="Takami S."/>
            <person name="Terashima Y."/>
            <person name="Suzuki O."/>
            <person name="Nakagawa S."/>
            <person name="Senoh A."/>
            <person name="Mizoguchi H."/>
            <person name="Goto Y."/>
            <person name="Shimizu F."/>
            <person name="Wakebe H."/>
            <person name="Hishigaki H."/>
            <person name="Watanabe T."/>
            <person name="Sugiyama A."/>
            <person name="Takemoto M."/>
            <person name="Kawakami B."/>
            <person name="Yamazaki M."/>
            <person name="Watanabe K."/>
            <person name="Kumagai A."/>
            <person name="Itakura S."/>
            <person name="Fukuzumi Y."/>
            <person name="Fujimori Y."/>
            <person name="Komiyama M."/>
            <person name="Tashiro H."/>
            <person name="Tanigami A."/>
            <person name="Fujiwara T."/>
            <person name="Ono T."/>
            <person name="Yamada K."/>
            <person name="Fujii Y."/>
            <person name="Ozaki K."/>
            <person name="Hirao M."/>
            <person name="Ohmori Y."/>
            <person name="Kawabata A."/>
            <person name="Hikiji T."/>
            <person name="Kobatake N."/>
            <person name="Inagaki H."/>
            <person name="Ikema Y."/>
            <person name="Okamoto S."/>
            <person name="Okitani R."/>
            <person name="Kawakami T."/>
            <person name="Noguchi S."/>
            <person name="Itoh T."/>
            <person name="Shigeta K."/>
            <person name="Senba T."/>
            <person name="Matsumura K."/>
            <person name="Nakajima Y."/>
            <person name="Mizuno T."/>
            <person name="Morinaga M."/>
            <person name="Sasaki M."/>
            <person name="Togashi T."/>
            <person name="Oyama M."/>
            <person name="Hata H."/>
            <person name="Watanabe M."/>
            <person name="Komatsu T."/>
            <person name="Mizushima-Sugano J."/>
            <person name="Satoh T."/>
            <person name="Shirai Y."/>
            <person name="Takahashi Y."/>
            <person name="Nakagawa K."/>
            <person name="Okumura K."/>
            <person name="Nagase T."/>
            <person name="Nomura N."/>
            <person name="Kikuchi H."/>
            <person name="Masuho Y."/>
            <person name="Yamashita R."/>
            <person name="Nakai K."/>
            <person name="Yada T."/>
            <person name="Nakamura Y."/>
            <person name="Ohara O."/>
            <person name="Isogai T."/>
            <person name="Sugano S."/>
        </authorList>
    </citation>
    <scope>NUCLEOTIDE SEQUENCE [LARGE SCALE MRNA] (ISOFORMS 1; 3 AND 4)</scope>
    <scope>VARIANTS HIS-15 AND THR-282</scope>
    <source>
        <tissue>Hippocampus</tissue>
        <tissue>Thalamus</tissue>
    </source>
</reference>
<reference key="4">
    <citation type="submission" date="2005-04" db="EMBL/GenBank/DDBJ databases">
        <authorList>
            <person name="Totoki Y."/>
            <person name="Toyoda A."/>
            <person name="Takeda T."/>
            <person name="Sakaki Y."/>
            <person name="Tanaka A."/>
            <person name="Yokoyama S."/>
        </authorList>
    </citation>
    <scope>NUCLEOTIDE SEQUENCE [LARGE SCALE MRNA] (ISOFORM 1)</scope>
    <source>
        <tissue>Synovium</tissue>
    </source>
</reference>
<reference key="5">
    <citation type="journal article" date="2003" name="Nature">
        <title>The DNA sequence and analysis of human chromosome 6.</title>
        <authorList>
            <person name="Mungall A.J."/>
            <person name="Palmer S.A."/>
            <person name="Sims S.K."/>
            <person name="Edwards C.A."/>
            <person name="Ashurst J.L."/>
            <person name="Wilming L."/>
            <person name="Jones M.C."/>
            <person name="Horton R."/>
            <person name="Hunt S.E."/>
            <person name="Scott C.E."/>
            <person name="Gilbert J.G.R."/>
            <person name="Clamp M.E."/>
            <person name="Bethel G."/>
            <person name="Milne S."/>
            <person name="Ainscough R."/>
            <person name="Almeida J.P."/>
            <person name="Ambrose K.D."/>
            <person name="Andrews T.D."/>
            <person name="Ashwell R.I.S."/>
            <person name="Babbage A.K."/>
            <person name="Bagguley C.L."/>
            <person name="Bailey J."/>
            <person name="Banerjee R."/>
            <person name="Barker D.J."/>
            <person name="Barlow K.F."/>
            <person name="Bates K."/>
            <person name="Beare D.M."/>
            <person name="Beasley H."/>
            <person name="Beasley O."/>
            <person name="Bird C.P."/>
            <person name="Blakey S.E."/>
            <person name="Bray-Allen S."/>
            <person name="Brook J."/>
            <person name="Brown A.J."/>
            <person name="Brown J.Y."/>
            <person name="Burford D.C."/>
            <person name="Burrill W."/>
            <person name="Burton J."/>
            <person name="Carder C."/>
            <person name="Carter N.P."/>
            <person name="Chapman J.C."/>
            <person name="Clark S.Y."/>
            <person name="Clark G."/>
            <person name="Clee C.M."/>
            <person name="Clegg S."/>
            <person name="Cobley V."/>
            <person name="Collier R.E."/>
            <person name="Collins J.E."/>
            <person name="Colman L.K."/>
            <person name="Corby N.R."/>
            <person name="Coville G.J."/>
            <person name="Culley K.M."/>
            <person name="Dhami P."/>
            <person name="Davies J."/>
            <person name="Dunn M."/>
            <person name="Earthrowl M.E."/>
            <person name="Ellington A.E."/>
            <person name="Evans K.A."/>
            <person name="Faulkner L."/>
            <person name="Francis M.D."/>
            <person name="Frankish A."/>
            <person name="Frankland J."/>
            <person name="French L."/>
            <person name="Garner P."/>
            <person name="Garnett J."/>
            <person name="Ghori M.J."/>
            <person name="Gilby L.M."/>
            <person name="Gillson C.J."/>
            <person name="Glithero R.J."/>
            <person name="Grafham D.V."/>
            <person name="Grant M."/>
            <person name="Gribble S."/>
            <person name="Griffiths C."/>
            <person name="Griffiths M.N.D."/>
            <person name="Hall R."/>
            <person name="Halls K.S."/>
            <person name="Hammond S."/>
            <person name="Harley J.L."/>
            <person name="Hart E.A."/>
            <person name="Heath P.D."/>
            <person name="Heathcott R."/>
            <person name="Holmes S.J."/>
            <person name="Howden P.J."/>
            <person name="Howe K.L."/>
            <person name="Howell G.R."/>
            <person name="Huckle E."/>
            <person name="Humphray S.J."/>
            <person name="Humphries M.D."/>
            <person name="Hunt A.R."/>
            <person name="Johnson C.M."/>
            <person name="Joy A.A."/>
            <person name="Kay M."/>
            <person name="Keenan S.J."/>
            <person name="Kimberley A.M."/>
            <person name="King A."/>
            <person name="Laird G.K."/>
            <person name="Langford C."/>
            <person name="Lawlor S."/>
            <person name="Leongamornlert D.A."/>
            <person name="Leversha M."/>
            <person name="Lloyd C.R."/>
            <person name="Lloyd D.M."/>
            <person name="Loveland J.E."/>
            <person name="Lovell J."/>
            <person name="Martin S."/>
            <person name="Mashreghi-Mohammadi M."/>
            <person name="Maslen G.L."/>
            <person name="Matthews L."/>
            <person name="McCann O.T."/>
            <person name="McLaren S.J."/>
            <person name="McLay K."/>
            <person name="McMurray A."/>
            <person name="Moore M.J.F."/>
            <person name="Mullikin J.C."/>
            <person name="Niblett D."/>
            <person name="Nickerson T."/>
            <person name="Novik K.L."/>
            <person name="Oliver K."/>
            <person name="Overton-Larty E.K."/>
            <person name="Parker A."/>
            <person name="Patel R."/>
            <person name="Pearce A.V."/>
            <person name="Peck A.I."/>
            <person name="Phillimore B.J.C.T."/>
            <person name="Phillips S."/>
            <person name="Plumb R.W."/>
            <person name="Porter K.M."/>
            <person name="Ramsey Y."/>
            <person name="Ranby S.A."/>
            <person name="Rice C.M."/>
            <person name="Ross M.T."/>
            <person name="Searle S.M."/>
            <person name="Sehra H.K."/>
            <person name="Sheridan E."/>
            <person name="Skuce C.D."/>
            <person name="Smith S."/>
            <person name="Smith M."/>
            <person name="Spraggon L."/>
            <person name="Squares S.L."/>
            <person name="Steward C.A."/>
            <person name="Sycamore N."/>
            <person name="Tamlyn-Hall G."/>
            <person name="Tester J."/>
            <person name="Theaker A.J."/>
            <person name="Thomas D.W."/>
            <person name="Thorpe A."/>
            <person name="Tracey A."/>
            <person name="Tromans A."/>
            <person name="Tubby B."/>
            <person name="Wall M."/>
            <person name="Wallis J.M."/>
            <person name="West A.P."/>
            <person name="White S.S."/>
            <person name="Whitehead S.L."/>
            <person name="Whittaker H."/>
            <person name="Wild A."/>
            <person name="Willey D.J."/>
            <person name="Wilmer T.E."/>
            <person name="Wood J.M."/>
            <person name="Wray P.W."/>
            <person name="Wyatt J.C."/>
            <person name="Young L."/>
            <person name="Younger R.M."/>
            <person name="Bentley D.R."/>
            <person name="Coulson A."/>
            <person name="Durbin R.M."/>
            <person name="Hubbard T."/>
            <person name="Sulston J.E."/>
            <person name="Dunham I."/>
            <person name="Rogers J."/>
            <person name="Beck S."/>
        </authorList>
    </citation>
    <scope>NUCLEOTIDE SEQUENCE [LARGE SCALE GENOMIC DNA]</scope>
</reference>
<reference key="6">
    <citation type="submission" date="2005-07" db="EMBL/GenBank/DDBJ databases">
        <authorList>
            <person name="Mural R.J."/>
            <person name="Istrail S."/>
            <person name="Sutton G.G."/>
            <person name="Florea L."/>
            <person name="Halpern A.L."/>
            <person name="Mobarry C.M."/>
            <person name="Lippert R."/>
            <person name="Walenz B."/>
            <person name="Shatkay H."/>
            <person name="Dew I."/>
            <person name="Miller J.R."/>
            <person name="Flanigan M.J."/>
            <person name="Edwards N.J."/>
            <person name="Bolanos R."/>
            <person name="Fasulo D."/>
            <person name="Halldorsson B.V."/>
            <person name="Hannenhalli S."/>
            <person name="Turner R."/>
            <person name="Yooseph S."/>
            <person name="Lu F."/>
            <person name="Nusskern D.R."/>
            <person name="Shue B.C."/>
            <person name="Zheng X.H."/>
            <person name="Zhong F."/>
            <person name="Delcher A.L."/>
            <person name="Huson D.H."/>
            <person name="Kravitz S.A."/>
            <person name="Mouchard L."/>
            <person name="Reinert K."/>
            <person name="Remington K.A."/>
            <person name="Clark A.G."/>
            <person name="Waterman M.S."/>
            <person name="Eichler E.E."/>
            <person name="Adams M.D."/>
            <person name="Hunkapiller M.W."/>
            <person name="Myers E.W."/>
            <person name="Venter J.C."/>
        </authorList>
    </citation>
    <scope>NUCLEOTIDE SEQUENCE [LARGE SCALE GENOMIC DNA]</scope>
</reference>
<reference key="7">
    <citation type="journal article" date="2004" name="Genome Res.">
        <title>The status, quality, and expansion of the NIH full-length cDNA project: the Mammalian Gene Collection (MGC).</title>
        <authorList>
            <consortium name="The MGC Project Team"/>
        </authorList>
    </citation>
    <scope>NUCLEOTIDE SEQUENCE [LARGE SCALE MRNA] (ISOFORM 1)</scope>
    <scope>VARIANT THR-456</scope>
</reference>
<reference key="8">
    <citation type="journal article" date="2010" name="J. Leukoc. Biol.">
        <title>Stimulation of human butyrophilin 3 molecules results in negative regulation of cellular immunity.</title>
        <authorList>
            <person name="Yamashiro H."/>
            <person name="Yoshizaki S."/>
            <person name="Tadaki T."/>
            <person name="Egawa K."/>
            <person name="Seo N."/>
        </authorList>
    </citation>
    <scope>GLYCOSYLATION</scope>
    <scope>TISSUE SPECIFICITY</scope>
</reference>
<reference key="9">
    <citation type="journal article" date="2010" name="Oncotarget">
        <title>CD277 is a negative co-stimulatory molecule universally expressed by ovarian cancer microenvironmental cells.</title>
        <authorList>
            <person name="Cubillos-Ruiz J.R."/>
            <person name="Martinez D."/>
            <person name="Scarlett U.K."/>
            <person name="Rutkowski M.R."/>
            <person name="Nesbeth Y.C."/>
            <person name="Camposeco-Jacobs A.L."/>
            <person name="Conejo-Garcia J.R."/>
        </authorList>
    </citation>
    <scope>FUNCTION</scope>
    <scope>SUBCELLULAR LOCATION</scope>
    <scope>TISSUE SPECIFICITY</scope>
</reference>
<reference key="10">
    <citation type="journal article" date="2011" name="Eur. J. Immunol.">
        <title>Differential role for CD277 as a co-regulator of the immune signal in T and NK cells.</title>
        <authorList>
            <person name="Messal N."/>
            <person name="Mamessier E."/>
            <person name="Sylvain A."/>
            <person name="Celis-Gutierrez J."/>
            <person name="Thibult M.L."/>
            <person name="Chetaille B."/>
            <person name="Firaguay G."/>
            <person name="Pastor S."/>
            <person name="Guillaume Y."/>
            <person name="Wang Q."/>
            <person name="Hirsch I."/>
            <person name="Nunes J.A."/>
            <person name="Olive D."/>
        </authorList>
    </citation>
    <scope>FUNCTION</scope>
    <scope>SUBCELLULAR LOCATION</scope>
    <scope>TISSUE SPECIFICITY</scope>
</reference>
<reference key="11">
    <citation type="journal article" date="2012" name="Blood">
        <title>Key implication of CD277/butyrophilin-3 (BTN3A) in cellular stress sensing by a major human gammadelta T-cell subset.</title>
        <authorList>
            <person name="Harly C."/>
            <person name="Guillaume Y."/>
            <person name="Nedellec S."/>
            <person name="Peigne C.M."/>
            <person name="Monkkonen H."/>
            <person name="Monkkonen J."/>
            <person name="Li J."/>
            <person name="Kuball J."/>
            <person name="Adams E.J."/>
            <person name="Netzer S."/>
            <person name="Dechanet-Merville J."/>
            <person name="Leger A."/>
            <person name="Herrmann T."/>
            <person name="Breathnach R."/>
            <person name="Olive D."/>
            <person name="Bonneville M."/>
            <person name="Scotet E."/>
        </authorList>
    </citation>
    <scope>FUNCTION</scope>
    <scope>SUBCELLULAR LOCATION</scope>
</reference>
<reference key="12">
    <citation type="journal article" date="2012" name="J. Biol. Chem.">
        <title>The molecular basis for modulation of human Vgamma9Vdelta2 T cell responses by CD277/butyrophilin-3 (BTN3A)-specific antibodies.</title>
        <authorList>
            <person name="Palakodeti A."/>
            <person name="Sandstrom A."/>
            <person name="Sundaresan L."/>
            <person name="Harly C."/>
            <person name="Nedellec S."/>
            <person name="Olive D."/>
            <person name="Scotet E."/>
            <person name="Bonneville M."/>
            <person name="Adams E.J."/>
        </authorList>
    </citation>
    <scope>X-RAY CRYSTALLOGRAPHY (1.94 ANGSTROMS) OF 30-246</scope>
    <scope>FUNCTION</scope>
    <scope>SUBUNIT</scope>
    <scope>DISULFIDE BONDS</scope>
    <scope>GLYCOSYLATION AT ASN-115</scope>
</reference>
<sequence length="513" mass="57677">MKMASFLAFLLLNFRVCLLLLQLLMPHSAQFSVLGPSGPILAMVGEDADLPCHLFPTMSAETMELKWVSSSLRQVVNVYADGKEVEDRQSAPYRGRTSILRDGITAGKAALRIHNVTASDSGKYLCYFQDGDFYEKALVELKVAALGSDLHVDVKGYKDGGIHLECRSTGWYPQPQIQWSNNKGENIPTVEAPVVADGVGLYAVAASVIMRGSSGEGVSCTIRSSLLGLEKTASISIADPFFRSAQRWIAALAGTLPVLLLLLGGAGYFLWQQQEEKKTQFRKKKREQELREMAWSTMKQEQSTRVKLLEELRWRSIQYASRGERHSAYNEWKKALFKPADVILDPKTANPILLVSEDQRSVQRAKEPQDLPDNPERFNWHYCVLGCESFISGRHYWEVEVGDRKEWHIGVCSKNVQRKGWVKMTPENGFWTMGLTDGNKYRTLTEPRTNLKLPKPPKKVGVFLDYETGDISFYNAVDGSHIHTFLDVSFSEALYPVFRILTLEPTALTICPA</sequence>
<protein>
    <recommendedName>
        <fullName>Butyrophilin subfamily 3 member A1</fullName>
    </recommendedName>
    <cdAntigenName>CD277</cdAntigenName>
</protein>
<name>BT3A1_HUMAN</name>
<gene>
    <name type="primary">BTN3A1</name>
    <name type="synonym">BTF5</name>
</gene>
<accession>O00481</accession>
<accession>A2A278</accession>
<accession>A8K2C8</accession>
<accession>B4DIQ1</accession>
<accession>B4DRM2</accession>
<accession>E9PGB4</accession>
<accession>E9PHG8</accession>
<accession>Q0P515</accession>
<accession>Q147X5</accession>
<accession>Q53F15</accession>
<accession>Q99420</accession>
<accession>Q9HCY1</accession>